<reference key="1">
    <citation type="journal article" date="2002" name="J. Mol. Microbiol. Biotechnol.">
        <title>The genome of Methanosarcina mazei: evidence for lateral gene transfer between Bacteria and Archaea.</title>
        <authorList>
            <person name="Deppenmeier U."/>
            <person name="Johann A."/>
            <person name="Hartsch T."/>
            <person name="Merkl R."/>
            <person name="Schmitz R.A."/>
            <person name="Martinez-Arias R."/>
            <person name="Henne A."/>
            <person name="Wiezer A."/>
            <person name="Baeumer S."/>
            <person name="Jacobi C."/>
            <person name="Brueggemann H."/>
            <person name="Lienard T."/>
            <person name="Christmann A."/>
            <person name="Boemecke M."/>
            <person name="Steckel S."/>
            <person name="Bhattacharyya A."/>
            <person name="Lykidis A."/>
            <person name="Overbeek R."/>
            <person name="Klenk H.-P."/>
            <person name="Gunsalus R.P."/>
            <person name="Fritz H.-J."/>
            <person name="Gottschalk G."/>
        </authorList>
    </citation>
    <scope>NUCLEOTIDE SEQUENCE [LARGE SCALE GENOMIC DNA]</scope>
    <source>
        <strain>ATCC BAA-159 / DSM 3647 / Goe1 / Go1 / JCM 11833 / OCM 88</strain>
    </source>
</reference>
<gene>
    <name evidence="1" type="primary">lysS2</name>
    <name type="ordered locus">MM_1916</name>
</gene>
<comment type="catalytic activity">
    <reaction evidence="1">
        <text>tRNA(Lys) + L-lysine + ATP = L-lysyl-tRNA(Lys) + AMP + diphosphate</text>
        <dbReference type="Rhea" id="RHEA:20792"/>
        <dbReference type="Rhea" id="RHEA-COMP:9696"/>
        <dbReference type="Rhea" id="RHEA-COMP:9697"/>
        <dbReference type="ChEBI" id="CHEBI:30616"/>
        <dbReference type="ChEBI" id="CHEBI:32551"/>
        <dbReference type="ChEBI" id="CHEBI:33019"/>
        <dbReference type="ChEBI" id="CHEBI:78442"/>
        <dbReference type="ChEBI" id="CHEBI:78529"/>
        <dbReference type="ChEBI" id="CHEBI:456215"/>
        <dbReference type="EC" id="6.1.1.6"/>
    </reaction>
</comment>
<comment type="cofactor">
    <cofactor evidence="1">
        <name>Mg(2+)</name>
        <dbReference type="ChEBI" id="CHEBI:18420"/>
    </cofactor>
    <text evidence="1">Binds 3 Mg(2+) ions per subunit.</text>
</comment>
<comment type="subunit">
    <text evidence="1">Homodimer.</text>
</comment>
<comment type="subcellular location">
    <subcellularLocation>
        <location>Cytoplasm</location>
    </subcellularLocation>
</comment>
<comment type="similarity">
    <text evidence="1">Belongs to the class-II aminoacyl-tRNA synthetase family.</text>
</comment>
<protein>
    <recommendedName>
        <fullName evidence="1">Lysine--tRNA ligase 2</fullName>
        <ecNumber evidence="1">6.1.1.6</ecNumber>
    </recommendedName>
    <alternativeName>
        <fullName evidence="1">Lysyl-tRNA synthetase 2</fullName>
        <shortName evidence="1">LysRS 2</shortName>
    </alternativeName>
</protein>
<keyword id="KW-0030">Aminoacyl-tRNA synthetase</keyword>
<keyword id="KW-0067">ATP-binding</keyword>
<keyword id="KW-0963">Cytoplasm</keyword>
<keyword id="KW-0436">Ligase</keyword>
<keyword id="KW-0460">Magnesium</keyword>
<keyword id="KW-0479">Metal-binding</keyword>
<keyword id="KW-0547">Nucleotide-binding</keyword>
<keyword id="KW-0648">Protein biosynthesis</keyword>
<accession>Q8PVP6</accession>
<sequence length="511" mass="58795">MTMEINNTDPFEKMPLPDDSGLSGSGAFDDSKLAKLNGVISQGLNPYPYKFEKDEDICEILEKFEDFEKNEGLTVRTAGRLYNIRKHGKMIFADLGDQAGRVQVLVRKGNLPDEEFEIFKNLVDSGDIIGVQGDLFRTKRGENSISVSEFSLLSKSLCALPEKFHGLKDVETRYRKRYLDLIVNAEKREIFVMRSKLISEIRRFLTDREFLEFETPILQTVYGGANARPFTTFHNCLGQNLFLRIAPELYLKRLVVGGYEKVFEICKNFRNEDIDTTHNPEFTMIEVYEAYRDYNDMMDLTESLVSELVFKLTGSYEVQMGEKTINLRSPWKRISMEDALKEYAGLDIFAHSIEDLKKIAIENRIEDYEKAKSHGEFLALLFEGLVEDKLIDPTFIYDFPVENSPLAKNHREKAGFVERFELFLNGWELANGYSELNDPLEQEKRFEEQDKKRKLGDLEAQTVDYDFINALGYGLPPTGGMGLGIDRLTMILSGLESIKEVILFPQMKRED</sequence>
<feature type="chain" id="PRO_0000152712" description="Lysine--tRNA ligase 2">
    <location>
        <begin position="1"/>
        <end position="511"/>
    </location>
</feature>
<feature type="region of interest" description="Disordered" evidence="2">
    <location>
        <begin position="1"/>
        <end position="22"/>
    </location>
</feature>
<feature type="binding site" evidence="1">
    <location>
        <position position="421"/>
    </location>
    <ligand>
        <name>Mg(2+)</name>
        <dbReference type="ChEBI" id="CHEBI:18420"/>
        <label>1</label>
    </ligand>
</feature>
<feature type="binding site" evidence="1">
    <location>
        <position position="428"/>
    </location>
    <ligand>
        <name>Mg(2+)</name>
        <dbReference type="ChEBI" id="CHEBI:18420"/>
        <label>1</label>
    </ligand>
</feature>
<feature type="binding site" evidence="1">
    <location>
        <position position="428"/>
    </location>
    <ligand>
        <name>Mg(2+)</name>
        <dbReference type="ChEBI" id="CHEBI:18420"/>
        <label>2</label>
    </ligand>
</feature>
<organism>
    <name type="scientific">Methanosarcina mazei (strain ATCC BAA-159 / DSM 3647 / Goe1 / Go1 / JCM 11833 / OCM 88)</name>
    <name type="common">Methanosarcina frisia</name>
    <dbReference type="NCBI Taxonomy" id="192952"/>
    <lineage>
        <taxon>Archaea</taxon>
        <taxon>Methanobacteriati</taxon>
        <taxon>Methanobacteriota</taxon>
        <taxon>Stenosarchaea group</taxon>
        <taxon>Methanomicrobia</taxon>
        <taxon>Methanosarcinales</taxon>
        <taxon>Methanosarcinaceae</taxon>
        <taxon>Methanosarcina</taxon>
    </lineage>
</organism>
<name>SYK2_METMA</name>
<evidence type="ECO:0000255" key="1">
    <source>
        <dbReference type="HAMAP-Rule" id="MF_00252"/>
    </source>
</evidence>
<evidence type="ECO:0000256" key="2">
    <source>
        <dbReference type="SAM" id="MobiDB-lite"/>
    </source>
</evidence>
<proteinExistence type="inferred from homology"/>
<dbReference type="EC" id="6.1.1.6" evidence="1"/>
<dbReference type="EMBL" id="AE008384">
    <property type="protein sequence ID" value="AAM31612.1"/>
    <property type="molecule type" value="Genomic_DNA"/>
</dbReference>
<dbReference type="SMR" id="Q8PVP6"/>
<dbReference type="KEGG" id="mma:MM_1916"/>
<dbReference type="PATRIC" id="fig|192952.21.peg.2206"/>
<dbReference type="eggNOG" id="arCOG00408">
    <property type="taxonomic scope" value="Archaea"/>
</dbReference>
<dbReference type="HOGENOM" id="CLU_008255_6_0_2"/>
<dbReference type="Proteomes" id="UP000000595">
    <property type="component" value="Chromosome"/>
</dbReference>
<dbReference type="GO" id="GO:0005829">
    <property type="term" value="C:cytosol"/>
    <property type="evidence" value="ECO:0007669"/>
    <property type="project" value="TreeGrafter"/>
</dbReference>
<dbReference type="GO" id="GO:0005524">
    <property type="term" value="F:ATP binding"/>
    <property type="evidence" value="ECO:0007669"/>
    <property type="project" value="UniProtKB-UniRule"/>
</dbReference>
<dbReference type="GO" id="GO:0004824">
    <property type="term" value="F:lysine-tRNA ligase activity"/>
    <property type="evidence" value="ECO:0007669"/>
    <property type="project" value="UniProtKB-UniRule"/>
</dbReference>
<dbReference type="GO" id="GO:0000287">
    <property type="term" value="F:magnesium ion binding"/>
    <property type="evidence" value="ECO:0007669"/>
    <property type="project" value="UniProtKB-UniRule"/>
</dbReference>
<dbReference type="GO" id="GO:0000049">
    <property type="term" value="F:tRNA binding"/>
    <property type="evidence" value="ECO:0007669"/>
    <property type="project" value="TreeGrafter"/>
</dbReference>
<dbReference type="GO" id="GO:0006430">
    <property type="term" value="P:lysyl-tRNA aminoacylation"/>
    <property type="evidence" value="ECO:0007669"/>
    <property type="project" value="UniProtKB-UniRule"/>
</dbReference>
<dbReference type="CDD" id="cd00775">
    <property type="entry name" value="LysRS_core"/>
    <property type="match status" value="1"/>
</dbReference>
<dbReference type="CDD" id="cd04322">
    <property type="entry name" value="LysRS_N"/>
    <property type="match status" value="1"/>
</dbReference>
<dbReference type="FunFam" id="2.40.50.140:FF:000024">
    <property type="entry name" value="Lysine--tRNA ligase"/>
    <property type="match status" value="1"/>
</dbReference>
<dbReference type="FunFam" id="3.30.930.10:FF:000151">
    <property type="entry name" value="Lysine--tRNA ligase"/>
    <property type="match status" value="1"/>
</dbReference>
<dbReference type="Gene3D" id="3.30.930.10">
    <property type="entry name" value="Bira Bifunctional Protein, Domain 2"/>
    <property type="match status" value="1"/>
</dbReference>
<dbReference type="Gene3D" id="2.40.50.140">
    <property type="entry name" value="Nucleic acid-binding proteins"/>
    <property type="match status" value="1"/>
</dbReference>
<dbReference type="HAMAP" id="MF_00252">
    <property type="entry name" value="Lys_tRNA_synth_class2"/>
    <property type="match status" value="1"/>
</dbReference>
<dbReference type="InterPro" id="IPR004364">
    <property type="entry name" value="Aa-tRNA-synt_II"/>
</dbReference>
<dbReference type="InterPro" id="IPR006195">
    <property type="entry name" value="aa-tRNA-synth_II"/>
</dbReference>
<dbReference type="InterPro" id="IPR045864">
    <property type="entry name" value="aa-tRNA-synth_II/BPL/LPL"/>
</dbReference>
<dbReference type="InterPro" id="IPR002313">
    <property type="entry name" value="Lys-tRNA-ligase_II"/>
</dbReference>
<dbReference type="InterPro" id="IPR044136">
    <property type="entry name" value="Lys-tRNA-ligase_II_N"/>
</dbReference>
<dbReference type="InterPro" id="IPR018149">
    <property type="entry name" value="Lys-tRNA-synth_II_C"/>
</dbReference>
<dbReference type="InterPro" id="IPR012340">
    <property type="entry name" value="NA-bd_OB-fold"/>
</dbReference>
<dbReference type="InterPro" id="IPR004365">
    <property type="entry name" value="NA-bd_OB_tRNA"/>
</dbReference>
<dbReference type="NCBIfam" id="TIGR00499">
    <property type="entry name" value="lysS_bact"/>
    <property type="match status" value="1"/>
</dbReference>
<dbReference type="NCBIfam" id="NF001756">
    <property type="entry name" value="PRK00484.1"/>
    <property type="match status" value="1"/>
</dbReference>
<dbReference type="PANTHER" id="PTHR42918:SF15">
    <property type="entry name" value="LYSINE--TRNA LIGASE, CHLOROPLASTIC_MITOCHONDRIAL"/>
    <property type="match status" value="1"/>
</dbReference>
<dbReference type="PANTHER" id="PTHR42918">
    <property type="entry name" value="LYSYL-TRNA SYNTHETASE"/>
    <property type="match status" value="1"/>
</dbReference>
<dbReference type="Pfam" id="PF00152">
    <property type="entry name" value="tRNA-synt_2"/>
    <property type="match status" value="1"/>
</dbReference>
<dbReference type="Pfam" id="PF01336">
    <property type="entry name" value="tRNA_anti-codon"/>
    <property type="match status" value="1"/>
</dbReference>
<dbReference type="PRINTS" id="PR00982">
    <property type="entry name" value="TRNASYNTHLYS"/>
</dbReference>
<dbReference type="SUPFAM" id="SSF55681">
    <property type="entry name" value="Class II aaRS and biotin synthetases"/>
    <property type="match status" value="1"/>
</dbReference>
<dbReference type="SUPFAM" id="SSF50249">
    <property type="entry name" value="Nucleic acid-binding proteins"/>
    <property type="match status" value="1"/>
</dbReference>
<dbReference type="PROSITE" id="PS50862">
    <property type="entry name" value="AA_TRNA_LIGASE_II"/>
    <property type="match status" value="1"/>
</dbReference>